<name>RK14_TOXGO</name>
<comment type="function">
    <text evidence="1">Binds to 23S rRNA.</text>
</comment>
<comment type="subunit">
    <text evidence="1">Part of the 50S ribosomal subunit.</text>
</comment>
<comment type="subcellular location">
    <subcellularLocation>
        <location>Plastid</location>
        <location>Apicoplast</location>
    </subcellularLocation>
</comment>
<comment type="similarity">
    <text evidence="2">Belongs to the universal ribosomal protein uL14 family.</text>
</comment>
<dbReference type="EMBL" id="U87145">
    <property type="protein sequence ID" value="AAD41139.1"/>
    <property type="molecule type" value="Genomic_DNA"/>
</dbReference>
<dbReference type="RefSeq" id="NP_044552.1">
    <property type="nucleotide sequence ID" value="NC_001799.1"/>
</dbReference>
<dbReference type="SMR" id="Q9XQQ6"/>
<dbReference type="GeneID" id="1466602"/>
<dbReference type="VEuPathDB" id="ToxoDB:TGARI_300611"/>
<dbReference type="VEuPathDB" id="ToxoDB:TGCAST_300611"/>
<dbReference type="VEuPathDB" id="ToxoDB:TGCOUG_300611"/>
<dbReference type="VEuPathDB" id="ToxoDB:TGFOU_300611"/>
<dbReference type="VEuPathDB" id="ToxoDB:TGMAS_300611"/>
<dbReference type="VEuPathDB" id="ToxoDB:TGME49_300611"/>
<dbReference type="VEuPathDB" id="ToxoDB:TGP89_300611"/>
<dbReference type="VEuPathDB" id="ToxoDB:TGPRC2_300611"/>
<dbReference type="VEuPathDB" id="ToxoDB:TGRH88_086340"/>
<dbReference type="VEuPathDB" id="ToxoDB:TGRUB_300611"/>
<dbReference type="VEuPathDB" id="ToxoDB:TGVAND_300611"/>
<dbReference type="GO" id="GO:0020011">
    <property type="term" value="C:apicoplast"/>
    <property type="evidence" value="ECO:0007669"/>
    <property type="project" value="UniProtKB-SubCell"/>
</dbReference>
<dbReference type="GO" id="GO:0005762">
    <property type="term" value="C:mitochondrial large ribosomal subunit"/>
    <property type="evidence" value="ECO:0007669"/>
    <property type="project" value="TreeGrafter"/>
</dbReference>
<dbReference type="GO" id="GO:0070180">
    <property type="term" value="F:large ribosomal subunit rRNA binding"/>
    <property type="evidence" value="ECO:0007669"/>
    <property type="project" value="TreeGrafter"/>
</dbReference>
<dbReference type="GO" id="GO:0003735">
    <property type="term" value="F:structural constituent of ribosome"/>
    <property type="evidence" value="ECO:0007669"/>
    <property type="project" value="InterPro"/>
</dbReference>
<dbReference type="GO" id="GO:0006412">
    <property type="term" value="P:translation"/>
    <property type="evidence" value="ECO:0007669"/>
    <property type="project" value="InterPro"/>
</dbReference>
<dbReference type="CDD" id="cd00337">
    <property type="entry name" value="Ribosomal_uL14"/>
    <property type="match status" value="1"/>
</dbReference>
<dbReference type="Gene3D" id="2.40.150.20">
    <property type="entry name" value="Ribosomal protein L14"/>
    <property type="match status" value="1"/>
</dbReference>
<dbReference type="HAMAP" id="MF_01367">
    <property type="entry name" value="Ribosomal_uL14"/>
    <property type="match status" value="1"/>
</dbReference>
<dbReference type="InterPro" id="IPR000218">
    <property type="entry name" value="Ribosomal_uL14"/>
</dbReference>
<dbReference type="InterPro" id="IPR036853">
    <property type="entry name" value="Ribosomal_uL14_sf"/>
</dbReference>
<dbReference type="PANTHER" id="PTHR11761">
    <property type="entry name" value="50S/60S RIBOSOMAL PROTEIN L14/L23"/>
    <property type="match status" value="1"/>
</dbReference>
<dbReference type="PANTHER" id="PTHR11761:SF3">
    <property type="entry name" value="LARGE RIBOSOMAL SUBUNIT PROTEIN UL14M"/>
    <property type="match status" value="1"/>
</dbReference>
<dbReference type="Pfam" id="PF00238">
    <property type="entry name" value="Ribosomal_L14"/>
    <property type="match status" value="1"/>
</dbReference>
<dbReference type="SMART" id="SM01374">
    <property type="entry name" value="Ribosomal_L14"/>
    <property type="match status" value="1"/>
</dbReference>
<dbReference type="SUPFAM" id="SSF50193">
    <property type="entry name" value="Ribosomal protein L14"/>
    <property type="match status" value="1"/>
</dbReference>
<proteinExistence type="inferred from homology"/>
<organism>
    <name type="scientific">Toxoplasma gondii</name>
    <dbReference type="NCBI Taxonomy" id="5811"/>
    <lineage>
        <taxon>Eukaryota</taxon>
        <taxon>Sar</taxon>
        <taxon>Alveolata</taxon>
        <taxon>Apicomplexa</taxon>
        <taxon>Conoidasida</taxon>
        <taxon>Coccidia</taxon>
        <taxon>Eucoccidiorida</taxon>
        <taxon>Eimeriorina</taxon>
        <taxon>Sarcocystidae</taxon>
        <taxon>Toxoplasma</taxon>
    </lineage>
</organism>
<feature type="chain" id="PRO_0000355906" description="Large ribosomal subunit protein uL14c">
    <location>
        <begin position="1"/>
        <end position="121"/>
    </location>
</feature>
<keyword id="KW-0933">Apicoplast</keyword>
<keyword id="KW-0934">Plastid</keyword>
<keyword id="KW-0687">Ribonucleoprotein</keyword>
<keyword id="KW-0689">Ribosomal protein</keyword>
<keyword id="KW-0694">RNA-binding</keyword>
<keyword id="KW-0699">rRNA-binding</keyword>
<geneLocation type="apicoplast"/>
<evidence type="ECO:0000250" key="1"/>
<evidence type="ECO:0000305" key="2"/>
<gene>
    <name type="primary">rpl14</name>
</gene>
<protein>
    <recommendedName>
        <fullName evidence="2">Large ribosomal subunit protein uL14c</fullName>
    </recommendedName>
    <alternativeName>
        <fullName>50S ribosomal protein L14, apicoplast</fullName>
    </alternativeName>
</protein>
<sequence>MTQLNSFFYVSDNTGVKKIFSIQNITRNSFLVNTTDIILGIIKEISFKSSFKYSEIVYGFVVRLKKTQNIQNRYNYIFNENAVILIDKNFNPLGTRIFGLFPENLKNNNYLKLNSLVLNII</sequence>
<reference key="1">
    <citation type="submission" date="1999-06" db="EMBL/GenBank/DDBJ databases">
        <title>Mapping, cloning, and complete sequence annotation of the 35-kb plastid genome of Toxoplasma gondii.</title>
        <authorList>
            <person name="Kissinger J.C."/>
            <person name="Donald R.G."/>
            <person name="Moulton A.L."/>
            <person name="Gutell R."/>
            <person name="Aiello D.P."/>
            <person name="Lang-Unnasch N."/>
            <person name="Roos D.S."/>
        </authorList>
    </citation>
    <scope>NUCLEOTIDE SEQUENCE [GENOMIC DNA]</scope>
    <source>
        <strain>RH</strain>
    </source>
</reference>
<accession>Q9XQQ6</accession>